<keyword id="KW-0007">Acetylation</keyword>
<keyword id="KW-0148">Chlorophyll</keyword>
<keyword id="KW-0150">Chloroplast</keyword>
<keyword id="KW-0157">Chromophore</keyword>
<keyword id="KW-0464">Manganese</keyword>
<keyword id="KW-0472">Membrane</keyword>
<keyword id="KW-0479">Metal-binding</keyword>
<keyword id="KW-0597">Phosphoprotein</keyword>
<keyword id="KW-0602">Photosynthesis</keyword>
<keyword id="KW-0604">Photosystem II</keyword>
<keyword id="KW-0934">Plastid</keyword>
<keyword id="KW-0793">Thylakoid</keyword>
<keyword id="KW-0812">Transmembrane</keyword>
<keyword id="KW-1133">Transmembrane helix</keyword>
<accession>P0C158</accession>
<protein>
    <recommendedName>
        <fullName evidence="1">Photosystem II CP43 reaction center protein</fullName>
    </recommendedName>
    <alternativeName>
        <fullName evidence="1">PSII 43 kDa protein</fullName>
    </alternativeName>
    <alternativeName>
        <fullName evidence="1">Protein CP-43</fullName>
    </alternativeName>
</protein>
<geneLocation type="chloroplast"/>
<proteinExistence type="inferred from homology"/>
<reference key="1">
    <citation type="journal article" date="2004" name="Curr. Genet.">
        <title>Structural features and transcript-editing analysis of sugarcane (Saccharum officinarum L.) chloroplast genome.</title>
        <authorList>
            <person name="Calsa T. Jr."/>
            <person name="Carraro D.M."/>
            <person name="Benatti M.R."/>
            <person name="Barbosa A.C."/>
            <person name="Kitajima J.P."/>
            <person name="Carrer H."/>
        </authorList>
    </citation>
    <scope>NUCLEOTIDE SEQUENCE [LARGE SCALE GENOMIC DNA]</scope>
    <source>
        <strain>cv. SP-80-3280</strain>
    </source>
</reference>
<gene>
    <name evidence="1" type="primary">psbC</name>
    <name type="ordered locus">PS091</name>
</gene>
<name>PSBC_SACHY</name>
<dbReference type="EMBL" id="AE009947">
    <property type="status" value="NOT_ANNOTATED_CDS"/>
    <property type="molecule type" value="Genomic_DNA"/>
</dbReference>
<dbReference type="SMR" id="P0C158"/>
<dbReference type="GO" id="GO:0009535">
    <property type="term" value="C:chloroplast thylakoid membrane"/>
    <property type="evidence" value="ECO:0007669"/>
    <property type="project" value="UniProtKB-SubCell"/>
</dbReference>
<dbReference type="GO" id="GO:0009523">
    <property type="term" value="C:photosystem II"/>
    <property type="evidence" value="ECO:0007669"/>
    <property type="project" value="UniProtKB-KW"/>
</dbReference>
<dbReference type="GO" id="GO:0016168">
    <property type="term" value="F:chlorophyll binding"/>
    <property type="evidence" value="ECO:0007669"/>
    <property type="project" value="UniProtKB-UniRule"/>
</dbReference>
<dbReference type="GO" id="GO:0045156">
    <property type="term" value="F:electron transporter, transferring electrons within the cyclic electron transport pathway of photosynthesis activity"/>
    <property type="evidence" value="ECO:0007669"/>
    <property type="project" value="InterPro"/>
</dbReference>
<dbReference type="GO" id="GO:0046872">
    <property type="term" value="F:metal ion binding"/>
    <property type="evidence" value="ECO:0007669"/>
    <property type="project" value="UniProtKB-KW"/>
</dbReference>
<dbReference type="GO" id="GO:0009772">
    <property type="term" value="P:photosynthetic electron transport in photosystem II"/>
    <property type="evidence" value="ECO:0007669"/>
    <property type="project" value="InterPro"/>
</dbReference>
<dbReference type="FunFam" id="1.10.10.670:FF:000001">
    <property type="entry name" value="Photosystem II CP43 reaction center protein"/>
    <property type="match status" value="1"/>
</dbReference>
<dbReference type="Gene3D" id="1.10.10.670">
    <property type="entry name" value="photosystem ii from thermosynechococcus elongatus"/>
    <property type="match status" value="1"/>
</dbReference>
<dbReference type="HAMAP" id="MF_01496">
    <property type="entry name" value="PSII_PsbC_CP43"/>
    <property type="match status" value="1"/>
</dbReference>
<dbReference type="InterPro" id="IPR000932">
    <property type="entry name" value="PS_antenna-like"/>
</dbReference>
<dbReference type="InterPro" id="IPR036001">
    <property type="entry name" value="PS_II_antenna-like_sf"/>
</dbReference>
<dbReference type="InterPro" id="IPR005869">
    <property type="entry name" value="PSII_PsbC"/>
</dbReference>
<dbReference type="InterPro" id="IPR044900">
    <property type="entry name" value="PSII_PsbC_sf"/>
</dbReference>
<dbReference type="NCBIfam" id="TIGR01153">
    <property type="entry name" value="psbC"/>
    <property type="match status" value="1"/>
</dbReference>
<dbReference type="Pfam" id="PF00421">
    <property type="entry name" value="PSII"/>
    <property type="match status" value="1"/>
</dbReference>
<dbReference type="SUPFAM" id="SSF161077">
    <property type="entry name" value="Photosystem II antenna protein-like"/>
    <property type="match status" value="1"/>
</dbReference>
<organism>
    <name type="scientific">Saccharum hybrid</name>
    <name type="common">Sugarcane</name>
    <dbReference type="NCBI Taxonomy" id="15819"/>
    <lineage>
        <taxon>Eukaryota</taxon>
        <taxon>Viridiplantae</taxon>
        <taxon>Streptophyta</taxon>
        <taxon>Embryophyta</taxon>
        <taxon>Tracheophyta</taxon>
        <taxon>Spermatophyta</taxon>
        <taxon>Magnoliopsida</taxon>
        <taxon>Liliopsida</taxon>
        <taxon>Poales</taxon>
        <taxon>Poaceae</taxon>
        <taxon>PACMAD clade</taxon>
        <taxon>Panicoideae</taxon>
        <taxon>Andropogonodae</taxon>
        <taxon>Andropogoneae</taxon>
        <taxon>Saccharinae</taxon>
        <taxon>Saccharum</taxon>
    </lineage>
</organism>
<feature type="propeptide" id="PRO_0000431204" evidence="1">
    <location>
        <begin position="1"/>
        <end position="14"/>
    </location>
</feature>
<feature type="chain" id="PRO_0000226926" description="Photosystem II CP43 reaction center protein" evidence="1">
    <location>
        <begin position="15"/>
        <end position="473"/>
    </location>
</feature>
<feature type="transmembrane region" description="Helical" evidence="1">
    <location>
        <begin position="69"/>
        <end position="93"/>
    </location>
</feature>
<feature type="transmembrane region" description="Helical" evidence="1">
    <location>
        <begin position="134"/>
        <end position="155"/>
    </location>
</feature>
<feature type="transmembrane region" description="Helical" evidence="1">
    <location>
        <begin position="178"/>
        <end position="200"/>
    </location>
</feature>
<feature type="transmembrane region" description="Helical" evidence="1">
    <location>
        <begin position="255"/>
        <end position="275"/>
    </location>
</feature>
<feature type="transmembrane region" description="Helical" evidence="1">
    <location>
        <begin position="291"/>
        <end position="312"/>
    </location>
</feature>
<feature type="transmembrane region" description="Helical" evidence="1">
    <location>
        <begin position="447"/>
        <end position="471"/>
    </location>
</feature>
<feature type="binding site" evidence="1">
    <location>
        <position position="367"/>
    </location>
    <ligand>
        <name>[CaMn4O5] cluster</name>
        <dbReference type="ChEBI" id="CHEBI:189552"/>
    </ligand>
</feature>
<feature type="modified residue" description="N-acetylthreonine" evidence="1">
    <location>
        <position position="15"/>
    </location>
</feature>
<feature type="modified residue" description="Phosphothreonine" evidence="1">
    <location>
        <position position="15"/>
    </location>
</feature>
<evidence type="ECO:0000255" key="1">
    <source>
        <dbReference type="HAMAP-Rule" id="MF_01496"/>
    </source>
</evidence>
<evidence type="ECO:0000305" key="2"/>
<sequence length="473" mass="51982">MKILYSLRRFYHVETLFNGTFVLAGRDQETTGFAWWAGNARLINLSGKLLGAHVAHAGLIVFWAGAMNLFEVAHFVPEKPMYEQGLILLPHLATLGWGVGPGGEVLDTFPYFVSGVLHLISSAVLGFGGIYHALLGPETLEESFPFFGYVWKDRNKMTTILGIHLILLGLGAFLLVLKALYFGGVYDTWAPGGGDVRKITNLTLSPGVIFGYLLKSPFGGEGWIVSVDDLEDIIGGHVWLGSICVLGGIWHILTKPFAWARRAFVWSGEAYLSYSLAALSVFGFIACCFVWFNNTAYPSEFYGPTGPEASQAQAFTFLVRDQRLGANVGSAQGPTGLGKYLMRSPTGEVIFGGETMRFWDLRAPWLEPLRGPNGLDLSRLKKDIQPWQERRSAEYMTHAPLGSLNSVGGVATEINAVNYVSPRSWLATSHFVLGFFFFVGHLWHAGRARAAAAGFEKGIDRDLEPVLYMTPLN</sequence>
<comment type="function">
    <text evidence="1">One of the components of the core complex of photosystem II (PSII). It binds chlorophyll and helps catalyze the primary light-induced photochemical processes of PSII. PSII is a light-driven water:plastoquinone oxidoreductase, using light energy to abstract electrons from H(2)O, generating O(2) and a proton gradient subsequently used for ATP formation.</text>
</comment>
<comment type="cofactor">
    <text evidence="1">Binds multiple chlorophylls and provides some of the ligands for the Ca-4Mn-5O cluster of the oxygen-evolving complex. It may also provide a ligand for a Cl- that is required for oxygen evolution. PSII binds additional chlorophylls, carotenoids and specific lipids.</text>
</comment>
<comment type="subunit">
    <text evidence="1">PSII is composed of 1 copy each of membrane proteins PsbA, PsbB, PsbC, PsbD, PsbE, PsbF, PsbH, PsbI, PsbJ, PsbK, PsbL, PsbM, PsbT, PsbX, PsbY, PsbZ, Psb30/Ycf12, at least 3 peripheral proteins of the oxygen-evolving complex and a large number of cofactors. It forms dimeric complexes.</text>
</comment>
<comment type="subcellular location">
    <subcellularLocation>
        <location evidence="1">Plastid</location>
        <location evidence="1">Chloroplast thylakoid membrane</location>
        <topology evidence="1">Multi-pass membrane protein</topology>
    </subcellularLocation>
</comment>
<comment type="similarity">
    <text evidence="1">Belongs to the PsbB/PsbC family. PsbC subfamily.</text>
</comment>
<comment type="sequence caution" evidence="2">
    <conflict type="frameshift">
        <sequence resource="EMBL" id="AE009947"/>
    </conflict>
</comment>